<feature type="chain" id="PRO_0000415131" description="S-methyl-5'-thioadenosine phosphorylase">
    <location>
        <begin position="1"/>
        <end position="310"/>
    </location>
</feature>
<feature type="binding site" evidence="1">
    <location>
        <position position="20"/>
    </location>
    <ligand>
        <name>phosphate</name>
        <dbReference type="ChEBI" id="CHEBI:43474"/>
    </ligand>
</feature>
<feature type="binding site" evidence="1">
    <location>
        <begin position="62"/>
        <end position="63"/>
    </location>
    <ligand>
        <name>phosphate</name>
        <dbReference type="ChEBI" id="CHEBI:43474"/>
    </ligand>
</feature>
<feature type="binding site" evidence="1">
    <location>
        <begin position="95"/>
        <end position="96"/>
    </location>
    <ligand>
        <name>phosphate</name>
        <dbReference type="ChEBI" id="CHEBI:43474"/>
    </ligand>
</feature>
<feature type="binding site" evidence="1">
    <location>
        <position position="197"/>
    </location>
    <ligand>
        <name>substrate</name>
    </ligand>
</feature>
<feature type="binding site" evidence="1">
    <location>
        <position position="198"/>
    </location>
    <ligand>
        <name>phosphate</name>
        <dbReference type="ChEBI" id="CHEBI:43474"/>
    </ligand>
</feature>
<feature type="binding site" evidence="1">
    <location>
        <begin position="221"/>
        <end position="223"/>
    </location>
    <ligand>
        <name>substrate</name>
    </ligand>
</feature>
<feature type="site" description="Important for substrate specificity" evidence="1">
    <location>
        <position position="179"/>
    </location>
</feature>
<feature type="site" description="Important for substrate specificity" evidence="1">
    <location>
        <position position="235"/>
    </location>
</feature>
<name>MTAP_NEUCR</name>
<gene>
    <name type="ORF">NCU03963</name>
    <name type="ORF">NCU03963.1</name>
</gene>
<proteinExistence type="inferred from homology"/>
<reference key="1">
    <citation type="journal article" date="2003" name="Nature">
        <title>The genome sequence of the filamentous fungus Neurospora crassa.</title>
        <authorList>
            <person name="Galagan J.E."/>
            <person name="Calvo S.E."/>
            <person name="Borkovich K.A."/>
            <person name="Selker E.U."/>
            <person name="Read N.D."/>
            <person name="Jaffe D.B."/>
            <person name="FitzHugh W."/>
            <person name="Ma L.-J."/>
            <person name="Smirnov S."/>
            <person name="Purcell S."/>
            <person name="Rehman B."/>
            <person name="Elkins T."/>
            <person name="Engels R."/>
            <person name="Wang S."/>
            <person name="Nielsen C.B."/>
            <person name="Butler J."/>
            <person name="Endrizzi M."/>
            <person name="Qui D."/>
            <person name="Ianakiev P."/>
            <person name="Bell-Pedersen D."/>
            <person name="Nelson M.A."/>
            <person name="Werner-Washburne M."/>
            <person name="Selitrennikoff C.P."/>
            <person name="Kinsey J.A."/>
            <person name="Braun E.L."/>
            <person name="Zelter A."/>
            <person name="Schulte U."/>
            <person name="Kothe G.O."/>
            <person name="Jedd G."/>
            <person name="Mewes H.-W."/>
            <person name="Staben C."/>
            <person name="Marcotte E."/>
            <person name="Greenberg D."/>
            <person name="Roy A."/>
            <person name="Foley K."/>
            <person name="Naylor J."/>
            <person name="Stange-Thomann N."/>
            <person name="Barrett R."/>
            <person name="Gnerre S."/>
            <person name="Kamal M."/>
            <person name="Kamvysselis M."/>
            <person name="Mauceli E.W."/>
            <person name="Bielke C."/>
            <person name="Rudd S."/>
            <person name="Frishman D."/>
            <person name="Krystofova S."/>
            <person name="Rasmussen C."/>
            <person name="Metzenberg R.L."/>
            <person name="Perkins D.D."/>
            <person name="Kroken S."/>
            <person name="Cogoni C."/>
            <person name="Macino G."/>
            <person name="Catcheside D.E.A."/>
            <person name="Li W."/>
            <person name="Pratt R.J."/>
            <person name="Osmani S.A."/>
            <person name="DeSouza C.P.C."/>
            <person name="Glass N.L."/>
            <person name="Orbach M.J."/>
            <person name="Berglund J.A."/>
            <person name="Voelker R."/>
            <person name="Yarden O."/>
            <person name="Plamann M."/>
            <person name="Seiler S."/>
            <person name="Dunlap J.C."/>
            <person name="Radford A."/>
            <person name="Aramayo R."/>
            <person name="Natvig D.O."/>
            <person name="Alex L.A."/>
            <person name="Mannhaupt G."/>
            <person name="Ebbole D.J."/>
            <person name="Freitag M."/>
            <person name="Paulsen I."/>
            <person name="Sachs M.S."/>
            <person name="Lander E.S."/>
            <person name="Nusbaum C."/>
            <person name="Birren B.W."/>
        </authorList>
    </citation>
    <scope>NUCLEOTIDE SEQUENCE [LARGE SCALE GENOMIC DNA]</scope>
    <source>
        <strain>ATCC 24698 / 74-OR23-1A / CBS 708.71 / DSM 1257 / FGSC 987</strain>
    </source>
</reference>
<protein>
    <recommendedName>
        <fullName evidence="1">S-methyl-5'-thioadenosine phosphorylase</fullName>
        <ecNumber evidence="1">2.4.2.28</ecNumber>
    </recommendedName>
    <alternativeName>
        <fullName evidence="1">5'-methylthioadenosine phosphorylase</fullName>
        <shortName evidence="1">MTA phosphorylase</shortName>
        <shortName evidence="1">MTAP</shortName>
        <shortName evidence="1">MTAPase</shortName>
    </alternativeName>
</protein>
<evidence type="ECO:0000255" key="1">
    <source>
        <dbReference type="HAMAP-Rule" id="MF_03155"/>
    </source>
</evidence>
<comment type="function">
    <text evidence="1">Catalyzes the reversible phosphorylation of S-methyl-5'-thioadenosine (MTA) to adenine and 5-methylthioribose-1-phosphate. Involved in the breakdown of MTA, a major by-product of polyamine biosynthesis. Responsible for the first step in the methionine salvage pathway after MTA has been generated from S-adenosylmethionine. Has broad substrate specificity with 6-aminopurine nucleosides as preferred substrates.</text>
</comment>
<comment type="catalytic activity">
    <reaction evidence="1">
        <text>S-methyl-5'-thioadenosine + phosphate = 5-(methylsulfanyl)-alpha-D-ribose 1-phosphate + adenine</text>
        <dbReference type="Rhea" id="RHEA:11852"/>
        <dbReference type="ChEBI" id="CHEBI:16708"/>
        <dbReference type="ChEBI" id="CHEBI:17509"/>
        <dbReference type="ChEBI" id="CHEBI:43474"/>
        <dbReference type="ChEBI" id="CHEBI:58533"/>
        <dbReference type="EC" id="2.4.2.28"/>
    </reaction>
</comment>
<comment type="pathway">
    <text evidence="1">Amino-acid biosynthesis; L-methionine biosynthesis via salvage pathway; S-methyl-5-thio-alpha-D-ribose 1-phosphate from S-methyl-5'-thioadenosine (phosphorylase route): step 1/1.</text>
</comment>
<comment type="subunit">
    <text evidence="1">Homotrimer.</text>
</comment>
<comment type="subcellular location">
    <subcellularLocation>
        <location evidence="1">Cytoplasm</location>
    </subcellularLocation>
    <subcellularLocation>
        <location evidence="1">Nucleus</location>
    </subcellularLocation>
</comment>
<comment type="similarity">
    <text evidence="1">Belongs to the PNP/MTAP phosphorylase family. MTAP subfamily.</text>
</comment>
<keyword id="KW-0963">Cytoplasm</keyword>
<keyword id="KW-0328">Glycosyltransferase</keyword>
<keyword id="KW-0539">Nucleus</keyword>
<keyword id="KW-0660">Purine salvage</keyword>
<keyword id="KW-1185">Reference proteome</keyword>
<keyword id="KW-0808">Transferase</keyword>
<dbReference type="EC" id="2.4.2.28" evidence="1"/>
<dbReference type="EMBL" id="CM002241">
    <property type="protein sequence ID" value="EAA28366.1"/>
    <property type="molecule type" value="Genomic_DNA"/>
</dbReference>
<dbReference type="SMR" id="Q7RZA5"/>
<dbReference type="FunCoup" id="Q7RZA5">
    <property type="interactions" value="389"/>
</dbReference>
<dbReference type="STRING" id="367110.Q7RZA5"/>
<dbReference type="PaxDb" id="5141-EFNCRP00000003734"/>
<dbReference type="EnsemblFungi" id="EAA28366">
    <property type="protein sequence ID" value="EAA28366"/>
    <property type="gene ID" value="NCU03963"/>
</dbReference>
<dbReference type="KEGG" id="ncr:NCU03963"/>
<dbReference type="VEuPathDB" id="FungiDB:NCU03963"/>
<dbReference type="HOGENOM" id="CLU_054456_0_1_1"/>
<dbReference type="InParanoid" id="Q7RZA5"/>
<dbReference type="OMA" id="ADPFCPE"/>
<dbReference type="OrthoDB" id="431409at2759"/>
<dbReference type="UniPathway" id="UPA00904">
    <property type="reaction ID" value="UER00873"/>
</dbReference>
<dbReference type="Proteomes" id="UP000001805">
    <property type="component" value="Chromosome 5, Linkage Group VI"/>
</dbReference>
<dbReference type="GO" id="GO:0005829">
    <property type="term" value="C:cytosol"/>
    <property type="evidence" value="ECO:0000318"/>
    <property type="project" value="GO_Central"/>
</dbReference>
<dbReference type="GO" id="GO:0005634">
    <property type="term" value="C:nucleus"/>
    <property type="evidence" value="ECO:0007669"/>
    <property type="project" value="UniProtKB-SubCell"/>
</dbReference>
<dbReference type="GO" id="GO:0003729">
    <property type="term" value="F:mRNA binding"/>
    <property type="evidence" value="ECO:0007669"/>
    <property type="project" value="EnsemblFungi"/>
</dbReference>
<dbReference type="GO" id="GO:0017061">
    <property type="term" value="F:S-methyl-5-thioadenosine phosphorylase activity"/>
    <property type="evidence" value="ECO:0000318"/>
    <property type="project" value="GO_Central"/>
</dbReference>
<dbReference type="GO" id="GO:0006537">
    <property type="term" value="P:glutamate biosynthetic process"/>
    <property type="evidence" value="ECO:0007669"/>
    <property type="project" value="EnsemblFungi"/>
</dbReference>
<dbReference type="GO" id="GO:0019509">
    <property type="term" value="P:L-methionine salvage from methylthioadenosine"/>
    <property type="evidence" value="ECO:0000318"/>
    <property type="project" value="GO_Central"/>
</dbReference>
<dbReference type="GO" id="GO:0006166">
    <property type="term" value="P:purine ribonucleoside salvage"/>
    <property type="evidence" value="ECO:0007669"/>
    <property type="project" value="UniProtKB-KW"/>
</dbReference>
<dbReference type="CDD" id="cd09010">
    <property type="entry name" value="MTAP_SsMTAPII_like_MTIP"/>
    <property type="match status" value="1"/>
</dbReference>
<dbReference type="FunFam" id="3.40.50.1580:FF:000008">
    <property type="entry name" value="S-methyl-5'-thioadenosine phosphorylase"/>
    <property type="match status" value="1"/>
</dbReference>
<dbReference type="Gene3D" id="3.40.50.1580">
    <property type="entry name" value="Nucleoside phosphorylase domain"/>
    <property type="match status" value="1"/>
</dbReference>
<dbReference type="HAMAP" id="MF_01963">
    <property type="entry name" value="MTAP"/>
    <property type="match status" value="1"/>
</dbReference>
<dbReference type="InterPro" id="IPR010044">
    <property type="entry name" value="MTAP"/>
</dbReference>
<dbReference type="InterPro" id="IPR000845">
    <property type="entry name" value="Nucleoside_phosphorylase_d"/>
</dbReference>
<dbReference type="InterPro" id="IPR035994">
    <property type="entry name" value="Nucleoside_phosphorylase_sf"/>
</dbReference>
<dbReference type="InterPro" id="IPR018099">
    <property type="entry name" value="Purine_phosphorylase-2_CS"/>
</dbReference>
<dbReference type="NCBIfam" id="TIGR01694">
    <property type="entry name" value="MTAP"/>
    <property type="match status" value="1"/>
</dbReference>
<dbReference type="PANTHER" id="PTHR42679">
    <property type="entry name" value="S-METHYL-5'-THIOADENOSINE PHOSPHORYLASE"/>
    <property type="match status" value="1"/>
</dbReference>
<dbReference type="PANTHER" id="PTHR42679:SF2">
    <property type="entry name" value="S-METHYL-5'-THIOADENOSINE PHOSPHORYLASE"/>
    <property type="match status" value="1"/>
</dbReference>
<dbReference type="Pfam" id="PF01048">
    <property type="entry name" value="PNP_UDP_1"/>
    <property type="match status" value="1"/>
</dbReference>
<dbReference type="SUPFAM" id="SSF53167">
    <property type="entry name" value="Purine and uridine phosphorylases"/>
    <property type="match status" value="1"/>
</dbReference>
<dbReference type="PROSITE" id="PS01240">
    <property type="entry name" value="PNP_MTAP_2"/>
    <property type="match status" value="1"/>
</dbReference>
<accession>Q7RZA5</accession>
<organism>
    <name type="scientific">Neurospora crassa (strain ATCC 24698 / 74-OR23-1A / CBS 708.71 / DSM 1257 / FGSC 987)</name>
    <dbReference type="NCBI Taxonomy" id="367110"/>
    <lineage>
        <taxon>Eukaryota</taxon>
        <taxon>Fungi</taxon>
        <taxon>Dikarya</taxon>
        <taxon>Ascomycota</taxon>
        <taxon>Pezizomycotina</taxon>
        <taxon>Sordariomycetes</taxon>
        <taxon>Sordariomycetidae</taxon>
        <taxon>Sordariales</taxon>
        <taxon>Sordariaceae</taxon>
        <taxon>Neurospora</taxon>
    </lineage>
</organism>
<sequence length="310" mass="33720">MENLPTTYDGPVHIAVIGGTGLSKLEGYVPVAALNPTTPWGSPSSPLMIFEHNGHAVAFLARHGLYHQLAPHEVPARANIAALRSIGVRTIIAFSAVGSLREEIKPMDFVIPDQIIDRTKGIRPFTFYEGGVVGHVGFADPFDAGLAQVVEKCASAMKGDGVVLHNKGTIICMEGPAFSTRAESHMYRSWGGSVINMSALPEAKLAREAELAYQMICMATDYDCWRDEAGEDVDVAMVMKYMAANGENAKHLVGAVLDELLKQDNSDLVLAKKWQGSAQGAVKFMTKPEGRDPEAMKRVEFLFPGFWEQN</sequence>